<gene>
    <name evidence="1" type="primary">glgC</name>
    <name type="ordered locus">Cyan7425_4763</name>
</gene>
<dbReference type="EC" id="2.7.7.27" evidence="1"/>
<dbReference type="EMBL" id="CP001344">
    <property type="protein sequence ID" value="ACL47068.1"/>
    <property type="molecule type" value="Genomic_DNA"/>
</dbReference>
<dbReference type="SMR" id="B8HM61"/>
<dbReference type="STRING" id="395961.Cyan7425_4763"/>
<dbReference type="KEGG" id="cyn:Cyan7425_4763"/>
<dbReference type="eggNOG" id="COG0448">
    <property type="taxonomic scope" value="Bacteria"/>
</dbReference>
<dbReference type="HOGENOM" id="CLU_029499_14_4_3"/>
<dbReference type="OrthoDB" id="9801810at2"/>
<dbReference type="UniPathway" id="UPA00164"/>
<dbReference type="GO" id="GO:0031470">
    <property type="term" value="C:carboxysome"/>
    <property type="evidence" value="ECO:0007669"/>
    <property type="project" value="UniProtKB-ARBA"/>
</dbReference>
<dbReference type="GO" id="GO:0005524">
    <property type="term" value="F:ATP binding"/>
    <property type="evidence" value="ECO:0007669"/>
    <property type="project" value="UniProtKB-KW"/>
</dbReference>
<dbReference type="GO" id="GO:0008878">
    <property type="term" value="F:glucose-1-phosphate adenylyltransferase activity"/>
    <property type="evidence" value="ECO:0007669"/>
    <property type="project" value="UniProtKB-UniRule"/>
</dbReference>
<dbReference type="GO" id="GO:0043886">
    <property type="term" value="F:structural constituent of carboxysome shell"/>
    <property type="evidence" value="ECO:0007669"/>
    <property type="project" value="UniProtKB-ARBA"/>
</dbReference>
<dbReference type="GO" id="GO:0005978">
    <property type="term" value="P:glycogen biosynthetic process"/>
    <property type="evidence" value="ECO:0007669"/>
    <property type="project" value="UniProtKB-UniRule"/>
</dbReference>
<dbReference type="CDD" id="cd02508">
    <property type="entry name" value="ADP_Glucose_PP"/>
    <property type="match status" value="1"/>
</dbReference>
<dbReference type="CDD" id="cd04651">
    <property type="entry name" value="LbH_G1P_AT_C"/>
    <property type="match status" value="1"/>
</dbReference>
<dbReference type="Gene3D" id="2.160.10.10">
    <property type="entry name" value="Hexapeptide repeat proteins"/>
    <property type="match status" value="1"/>
</dbReference>
<dbReference type="Gene3D" id="3.90.550.10">
    <property type="entry name" value="Spore Coat Polysaccharide Biosynthesis Protein SpsA, Chain A"/>
    <property type="match status" value="1"/>
</dbReference>
<dbReference type="HAMAP" id="MF_00624">
    <property type="entry name" value="GlgC"/>
    <property type="match status" value="1"/>
</dbReference>
<dbReference type="InterPro" id="IPR011831">
    <property type="entry name" value="ADP-Glc_PPase"/>
</dbReference>
<dbReference type="InterPro" id="IPR005836">
    <property type="entry name" value="ADP_Glu_pyroP_CS"/>
</dbReference>
<dbReference type="InterPro" id="IPR023049">
    <property type="entry name" value="GlgC_bac"/>
</dbReference>
<dbReference type="InterPro" id="IPR005835">
    <property type="entry name" value="NTP_transferase_dom"/>
</dbReference>
<dbReference type="InterPro" id="IPR029044">
    <property type="entry name" value="Nucleotide-diphossugar_trans"/>
</dbReference>
<dbReference type="InterPro" id="IPR011004">
    <property type="entry name" value="Trimer_LpxA-like_sf"/>
</dbReference>
<dbReference type="NCBIfam" id="TIGR02091">
    <property type="entry name" value="glgC"/>
    <property type="match status" value="1"/>
</dbReference>
<dbReference type="NCBIfam" id="NF002772">
    <property type="entry name" value="PRK02862.1"/>
    <property type="match status" value="1"/>
</dbReference>
<dbReference type="PANTHER" id="PTHR43523:SF12">
    <property type="entry name" value="GLUCOSE-1-PHOSPHATE ADENYLYLTRANSFERASE LARGE SUBUNIT 1, CHLOROPLASTIC-RELATED"/>
    <property type="match status" value="1"/>
</dbReference>
<dbReference type="PANTHER" id="PTHR43523">
    <property type="entry name" value="GLUCOSE-1-PHOSPHATE ADENYLYLTRANSFERASE-RELATED"/>
    <property type="match status" value="1"/>
</dbReference>
<dbReference type="Pfam" id="PF25247">
    <property type="entry name" value="LbH_GLGC"/>
    <property type="match status" value="1"/>
</dbReference>
<dbReference type="Pfam" id="PF00483">
    <property type="entry name" value="NTP_transferase"/>
    <property type="match status" value="1"/>
</dbReference>
<dbReference type="SUPFAM" id="SSF53448">
    <property type="entry name" value="Nucleotide-diphospho-sugar transferases"/>
    <property type="match status" value="1"/>
</dbReference>
<dbReference type="SUPFAM" id="SSF51161">
    <property type="entry name" value="Trimeric LpxA-like enzymes"/>
    <property type="match status" value="1"/>
</dbReference>
<dbReference type="PROSITE" id="PS00808">
    <property type="entry name" value="ADP_GLC_PYROPHOSPH_1"/>
    <property type="match status" value="1"/>
</dbReference>
<dbReference type="PROSITE" id="PS00809">
    <property type="entry name" value="ADP_GLC_PYROPHOSPH_2"/>
    <property type="match status" value="1"/>
</dbReference>
<dbReference type="PROSITE" id="PS00810">
    <property type="entry name" value="ADP_GLC_PYROPHOSPH_3"/>
    <property type="match status" value="1"/>
</dbReference>
<name>GLGC_CYAP4</name>
<keyword id="KW-0067">ATP-binding</keyword>
<keyword id="KW-0119">Carbohydrate metabolism</keyword>
<keyword id="KW-0320">Glycogen biosynthesis</keyword>
<keyword id="KW-0321">Glycogen metabolism</keyword>
<keyword id="KW-0547">Nucleotide-binding</keyword>
<keyword id="KW-0548">Nucleotidyltransferase</keyword>
<keyword id="KW-0808">Transferase</keyword>
<sequence length="429" mass="48155">MKKVLAIILGGGAGTRLYPLTKQRAKPAVPLAGKYRLIDIPVSNCINSEITHVYVLTQFNSASLNRHIARTYNFSGFSDGFVEVLAAQQTPENPDWFQGTADAVRQYLWLLSDWEVDYYLILSGDHLYRMDYRLFVNRHRDTNADITLSVLPVEEQVASSFGLLQVDHSGRVTAFSEKPQGEALTRMRVDTTDFGLTPAEAAHKPYLASMGIYVFNRQVLIDLLKQSPQSTDFGKEIIPMAATDHNVQTYLFNDYWEDIGTISSFYEANLALTRQPQPPFSFYDEKAPIYTRPRYLPPSKLLDCQVTESIIGEGCILKNCQIQHSVLGVRSRIESGCVIDNALLMGADFYQPFAERDHKIKNNSVPLGIGADTIVRRAIVDKNACIGRNVKIVNKDHVEEANRESEGFYIRNGIVVVLKNAVIPDNTVI</sequence>
<comment type="function">
    <text evidence="1">Involved in the biosynthesis of ADP-glucose, a building block required for the elongation reactions to produce glycogen. Catalyzes the reaction between ATP and alpha-D-glucose 1-phosphate (G1P) to produce pyrophosphate and ADP-Glc.</text>
</comment>
<comment type="catalytic activity">
    <reaction evidence="1">
        <text>alpha-D-glucose 1-phosphate + ATP + H(+) = ADP-alpha-D-glucose + diphosphate</text>
        <dbReference type="Rhea" id="RHEA:12120"/>
        <dbReference type="ChEBI" id="CHEBI:15378"/>
        <dbReference type="ChEBI" id="CHEBI:30616"/>
        <dbReference type="ChEBI" id="CHEBI:33019"/>
        <dbReference type="ChEBI" id="CHEBI:57498"/>
        <dbReference type="ChEBI" id="CHEBI:58601"/>
        <dbReference type="EC" id="2.7.7.27"/>
    </reaction>
</comment>
<comment type="pathway">
    <text evidence="1">Glycan biosynthesis; glycogen biosynthesis.</text>
</comment>
<comment type="subunit">
    <text evidence="1">Homotetramer.</text>
</comment>
<comment type="similarity">
    <text evidence="1">Belongs to the bacterial/plant glucose-1-phosphate adenylyltransferase family.</text>
</comment>
<proteinExistence type="inferred from homology"/>
<evidence type="ECO:0000255" key="1">
    <source>
        <dbReference type="HAMAP-Rule" id="MF_00624"/>
    </source>
</evidence>
<feature type="chain" id="PRO_1000147224" description="Glucose-1-phosphate adenylyltransferase">
    <location>
        <begin position="1"/>
        <end position="429"/>
    </location>
</feature>
<feature type="binding site" evidence="1">
    <location>
        <position position="162"/>
    </location>
    <ligand>
        <name>alpha-D-glucose 1-phosphate</name>
        <dbReference type="ChEBI" id="CHEBI:58601"/>
    </ligand>
</feature>
<feature type="binding site" evidence="1">
    <location>
        <begin position="177"/>
        <end position="178"/>
    </location>
    <ligand>
        <name>alpha-D-glucose 1-phosphate</name>
        <dbReference type="ChEBI" id="CHEBI:58601"/>
    </ligand>
</feature>
<feature type="binding site" evidence="1">
    <location>
        <position position="209"/>
    </location>
    <ligand>
        <name>alpha-D-glucose 1-phosphate</name>
        <dbReference type="ChEBI" id="CHEBI:58601"/>
    </ligand>
</feature>
<accession>B8HM61</accession>
<organism>
    <name type="scientific">Cyanothece sp. (strain PCC 7425 / ATCC 29141)</name>
    <dbReference type="NCBI Taxonomy" id="395961"/>
    <lineage>
        <taxon>Bacteria</taxon>
        <taxon>Bacillati</taxon>
        <taxon>Cyanobacteriota</taxon>
        <taxon>Cyanophyceae</taxon>
        <taxon>Gomontiellales</taxon>
        <taxon>Cyanothecaceae</taxon>
        <taxon>Cyanothece</taxon>
    </lineage>
</organism>
<reference key="1">
    <citation type="journal article" date="2011" name="MBio">
        <title>Novel metabolic attributes of the genus Cyanothece, comprising a group of unicellular nitrogen-fixing Cyanobacteria.</title>
        <authorList>
            <person name="Bandyopadhyay A."/>
            <person name="Elvitigala T."/>
            <person name="Welsh E."/>
            <person name="Stockel J."/>
            <person name="Liberton M."/>
            <person name="Min H."/>
            <person name="Sherman L.A."/>
            <person name="Pakrasi H.B."/>
        </authorList>
    </citation>
    <scope>NUCLEOTIDE SEQUENCE [LARGE SCALE GENOMIC DNA]</scope>
    <source>
        <strain>PCC 7425 / ATCC 29141</strain>
    </source>
</reference>
<protein>
    <recommendedName>
        <fullName evidence="1">Glucose-1-phosphate adenylyltransferase</fullName>
        <ecNumber evidence="1">2.7.7.27</ecNumber>
    </recommendedName>
    <alternativeName>
        <fullName evidence="1">ADP-glucose pyrophosphorylase</fullName>
        <shortName evidence="1">ADPGlc PPase</shortName>
    </alternativeName>
    <alternativeName>
        <fullName evidence="1">ADP-glucose synthase</fullName>
    </alternativeName>
</protein>